<keyword id="KW-0173">Coenzyme A biosynthesis</keyword>
<keyword id="KW-0342">GTP-binding</keyword>
<keyword id="KW-0418">Kinase</keyword>
<keyword id="KW-0547">Nucleotide-binding</keyword>
<keyword id="KW-0808">Transferase</keyword>
<sequence length="161" mass="17285">MLRLPEAHRDLFKKPFGTLYTSVDELLPRLEGRAVYAVGDVVTHNLLAAGVVPDIAIIDGYTMRTPCNRSPLLRARRLTVKNPPGTITGELTDAIDEAVRGQPAVIFVDGEEDLAVIPLVLAAPDGAAVLYGQPAEGVVLRLVDTAAKQEAASMLSIFVRE</sequence>
<gene>
    <name type="ordered locus">Memar_2244</name>
</gene>
<name>DPCKG_METMJ</name>
<comment type="function">
    <text evidence="1">Catalyzes the GTP-dependent phosphorylation of the 3'-hydroxyl group of dephosphocoenzyme A to form coenzyme A (CoA).</text>
</comment>
<comment type="catalytic activity">
    <reaction evidence="1">
        <text>3'-dephospho-CoA + GTP = GDP + CoA + H(+)</text>
        <dbReference type="Rhea" id="RHEA:61156"/>
        <dbReference type="ChEBI" id="CHEBI:15378"/>
        <dbReference type="ChEBI" id="CHEBI:37565"/>
        <dbReference type="ChEBI" id="CHEBI:57287"/>
        <dbReference type="ChEBI" id="CHEBI:57328"/>
        <dbReference type="ChEBI" id="CHEBI:58189"/>
        <dbReference type="EC" id="2.7.1.237"/>
    </reaction>
</comment>
<comment type="pathway">
    <text evidence="1">Cofactor biosynthesis; coenzyme A biosynthesis.</text>
</comment>
<comment type="similarity">
    <text evidence="1">Belongs to the GTP-dependent DPCK family.</text>
</comment>
<dbReference type="EC" id="2.7.1.237" evidence="1"/>
<dbReference type="EMBL" id="CP000562">
    <property type="protein sequence ID" value="ABN58167.1"/>
    <property type="molecule type" value="Genomic_DNA"/>
</dbReference>
<dbReference type="RefSeq" id="WP_011845076.1">
    <property type="nucleotide sequence ID" value="NC_009051.1"/>
</dbReference>
<dbReference type="SMR" id="A3CXR7"/>
<dbReference type="STRING" id="368407.Memar_2244"/>
<dbReference type="GeneID" id="4846611"/>
<dbReference type="KEGG" id="mem:Memar_2244"/>
<dbReference type="eggNOG" id="arCOG04076">
    <property type="taxonomic scope" value="Archaea"/>
</dbReference>
<dbReference type="HOGENOM" id="CLU_120795_1_0_2"/>
<dbReference type="OrthoDB" id="15447at2157"/>
<dbReference type="UniPathway" id="UPA00241"/>
<dbReference type="Proteomes" id="UP000002146">
    <property type="component" value="Chromosome"/>
</dbReference>
<dbReference type="GO" id="GO:0005525">
    <property type="term" value="F:GTP binding"/>
    <property type="evidence" value="ECO:0007669"/>
    <property type="project" value="UniProtKB-UniRule"/>
</dbReference>
<dbReference type="GO" id="GO:0016301">
    <property type="term" value="F:kinase activity"/>
    <property type="evidence" value="ECO:0007669"/>
    <property type="project" value="UniProtKB-UniRule"/>
</dbReference>
<dbReference type="GO" id="GO:0015937">
    <property type="term" value="P:coenzyme A biosynthetic process"/>
    <property type="evidence" value="ECO:0007669"/>
    <property type="project" value="UniProtKB-UniRule"/>
</dbReference>
<dbReference type="HAMAP" id="MF_00590">
    <property type="entry name" value="Dephospho_CoA_kinase_GTP_dep"/>
    <property type="match status" value="1"/>
</dbReference>
<dbReference type="InterPro" id="IPR007164">
    <property type="entry name" value="GTP-dep_dephospho-CoA_kin"/>
</dbReference>
<dbReference type="PANTHER" id="PTHR40732:SF1">
    <property type="entry name" value="GTP-DEPENDENT DEPHOSPHO-COA KINASE"/>
    <property type="match status" value="1"/>
</dbReference>
<dbReference type="PANTHER" id="PTHR40732">
    <property type="entry name" value="UPF0218 PROTEIN TK1697"/>
    <property type="match status" value="1"/>
</dbReference>
<dbReference type="Pfam" id="PF04019">
    <property type="entry name" value="DUF359"/>
    <property type="match status" value="1"/>
</dbReference>
<dbReference type="PIRSF" id="PIRSF006533">
    <property type="entry name" value="UCP006533"/>
    <property type="match status" value="1"/>
</dbReference>
<accession>A3CXR7</accession>
<reference key="1">
    <citation type="journal article" date="2009" name="Stand. Genomic Sci.">
        <title>Complete genome sequence of Methanoculleus marisnigri Romesser et al. 1981 type strain JR1.</title>
        <authorList>
            <person name="Anderson I.J."/>
            <person name="Sieprawska-Lupa M."/>
            <person name="Lapidus A."/>
            <person name="Nolan M."/>
            <person name="Copeland A."/>
            <person name="Glavina Del Rio T."/>
            <person name="Tice H."/>
            <person name="Dalin E."/>
            <person name="Barry K."/>
            <person name="Saunders E."/>
            <person name="Han C."/>
            <person name="Brettin T."/>
            <person name="Detter J.C."/>
            <person name="Bruce D."/>
            <person name="Mikhailova N."/>
            <person name="Pitluck S."/>
            <person name="Hauser L."/>
            <person name="Land M."/>
            <person name="Lucas S."/>
            <person name="Richardson P."/>
            <person name="Whitman W.B."/>
            <person name="Kyrpides N.C."/>
        </authorList>
    </citation>
    <scope>NUCLEOTIDE SEQUENCE [LARGE SCALE GENOMIC DNA]</scope>
    <source>
        <strain>ATCC 35101 / DSM 1498 / JR1</strain>
    </source>
</reference>
<feature type="chain" id="PRO_0000380057" description="GTP-dependent dephospho-CoA kinase">
    <location>
        <begin position="1"/>
        <end position="161"/>
    </location>
</feature>
<feature type="binding site" evidence="1">
    <location>
        <position position="40"/>
    </location>
    <ligand>
        <name>GTP</name>
        <dbReference type="ChEBI" id="CHEBI:37565"/>
    </ligand>
</feature>
<feature type="binding site" evidence="1">
    <location>
        <position position="41"/>
    </location>
    <ligand>
        <name>GTP</name>
        <dbReference type="ChEBI" id="CHEBI:37565"/>
    </ligand>
</feature>
<feature type="binding site" evidence="1">
    <location>
        <position position="42"/>
    </location>
    <ligand>
        <name>GTP</name>
        <dbReference type="ChEBI" id="CHEBI:37565"/>
    </ligand>
</feature>
<feature type="binding site" evidence="1">
    <location>
        <position position="59"/>
    </location>
    <ligand>
        <name>GTP</name>
        <dbReference type="ChEBI" id="CHEBI:37565"/>
    </ligand>
</feature>
<feature type="binding site" evidence="1">
    <location>
        <position position="112"/>
    </location>
    <ligand>
        <name>GTP</name>
        <dbReference type="ChEBI" id="CHEBI:37565"/>
    </ligand>
</feature>
<proteinExistence type="inferred from homology"/>
<protein>
    <recommendedName>
        <fullName evidence="1">GTP-dependent dephospho-CoA kinase</fullName>
        <ecNumber evidence="1">2.7.1.237</ecNumber>
    </recommendedName>
    <alternativeName>
        <fullName evidence="1">Dephospho-coenzyme A kinase</fullName>
        <shortName evidence="1">DPCK</shortName>
    </alternativeName>
</protein>
<evidence type="ECO:0000255" key="1">
    <source>
        <dbReference type="HAMAP-Rule" id="MF_00590"/>
    </source>
</evidence>
<organism>
    <name type="scientific">Methanoculleus marisnigri (strain ATCC 35101 / DSM 1498 / JR1)</name>
    <dbReference type="NCBI Taxonomy" id="368407"/>
    <lineage>
        <taxon>Archaea</taxon>
        <taxon>Methanobacteriati</taxon>
        <taxon>Methanobacteriota</taxon>
        <taxon>Stenosarchaea group</taxon>
        <taxon>Methanomicrobia</taxon>
        <taxon>Methanomicrobiales</taxon>
        <taxon>Methanomicrobiaceae</taxon>
        <taxon>Methanoculleus</taxon>
    </lineage>
</organism>